<feature type="chain" id="PRO_0000453919" description="Protein Aeq5-like2" evidence="6">
    <location>
        <begin position="1"/>
        <end position="117"/>
    </location>
</feature>
<feature type="topological domain" description="Cytoplasmic" evidence="6">
    <location>
        <begin position="1"/>
        <end position="36"/>
    </location>
</feature>
<feature type="transmembrane region" description="Helical" evidence="2">
    <location>
        <begin position="37"/>
        <end position="56"/>
    </location>
</feature>
<feature type="topological domain" description="Extracellular" evidence="6">
    <location>
        <begin position="57"/>
        <end position="117"/>
    </location>
</feature>
<feature type="disulfide bond" evidence="1">
    <location>
        <begin position="59"/>
        <end position="94"/>
    </location>
</feature>
<feature type="disulfide bond" evidence="1">
    <location>
        <begin position="63"/>
        <end position="90"/>
    </location>
</feature>
<feature type="disulfide bond" evidence="1">
    <location>
        <begin position="70"/>
        <end position="83"/>
    </location>
</feature>
<feature type="disulfide bond" evidence="1">
    <location>
        <begin position="74"/>
        <end position="80"/>
    </location>
</feature>
<name>AEQL2_NEMVE</name>
<keyword id="KW-1015">Disulfide bond</keyword>
<keyword id="KW-0472">Membrane</keyword>
<keyword id="KW-0812">Transmembrane</keyword>
<keyword id="KW-1133">Transmembrane helix</keyword>
<protein>
    <recommendedName>
        <fullName evidence="4">Protein Aeq5-like2</fullName>
    </recommendedName>
    <alternativeName>
        <fullName evidence="4">Nve8041</fullName>
    </alternativeName>
</protein>
<reference key="1">
    <citation type="journal article" date="2020" name="Proc. Natl. Acad. Sci. U.S.A.">
        <title>Toxin-like neuropeptides in the sea anemone Nematostella unravel recruitment from the nervous system to venom.</title>
        <authorList>
            <person name="Sachkova M.Y."/>
            <person name="Landau M."/>
            <person name="Surm J.M."/>
            <person name="Macrander J."/>
            <person name="Singer S.A."/>
            <person name="Reitzel A.M."/>
            <person name="Moran Y."/>
        </authorList>
    </citation>
    <scope>NUCLEOTIDE SEQUENCE [MRNA]</scope>
    <scope>TISSUE SPECIFICITY</scope>
</reference>
<comment type="subcellular location">
    <subcellularLocation>
        <location evidence="2">Membrane</location>
        <topology evidence="2">Single-pass membrane protein</topology>
    </subcellularLocation>
</comment>
<comment type="tissue specificity">
    <text evidence="3">Expressed in endodermal ganglion neurons, apparently bipolar and following mesentery folds (observed in both planulae and primary polyps). It not expressed in nematocytes.</text>
</comment>
<comment type="PTM">
    <text evidence="5">The mature peptide may be cleaved at a dibasic residue site and be shorter than the sequence shown (possibly residues 1-94).</text>
</comment>
<comment type="online information" name="National Center for Biotechnology Information (NCBI)">
    <link uri="https://www.ncbi.nlm.nih.gov/nuccore/XM_032367382.1/"/>
</comment>
<organism>
    <name type="scientific">Nematostella vectensis</name>
    <name type="common">Starlet sea anemone</name>
    <dbReference type="NCBI Taxonomy" id="45351"/>
    <lineage>
        <taxon>Eukaryota</taxon>
        <taxon>Metazoa</taxon>
        <taxon>Cnidaria</taxon>
        <taxon>Anthozoa</taxon>
        <taxon>Hexacorallia</taxon>
        <taxon>Actiniaria</taxon>
        <taxon>Edwardsiidae</taxon>
        <taxon>Nematostella</taxon>
    </lineage>
</organism>
<proteinExistence type="evidence at transcript level"/>
<sequence>MLVNARAIRQSIGIVVAQCRRDLESNRTLDYRTRMRTSLILVAMVMVSVLLPYTYGSSCDSFCTEQANKCLTGCEGFVGCMECTNFAGHCREQCRKRSVKRRKEIRARFTKEPTEES</sequence>
<dbReference type="GO" id="GO:0016020">
    <property type="term" value="C:membrane"/>
    <property type="evidence" value="ECO:0007669"/>
    <property type="project" value="UniProtKB-SubCell"/>
</dbReference>
<accession>P0DQS0</accession>
<evidence type="ECO:0000250" key="1">
    <source>
        <dbReference type="UniProtKB" id="Q3C258"/>
    </source>
</evidence>
<evidence type="ECO:0000255" key="2"/>
<evidence type="ECO:0000269" key="3">
    <source>
    </source>
</evidence>
<evidence type="ECO:0000303" key="4">
    <source>
    </source>
</evidence>
<evidence type="ECO:0000305" key="5"/>
<evidence type="ECO:0000305" key="6">
    <source>
    </source>
</evidence>